<sequence>MRLLFLAVLRPHTGNAVTAQRVRAHLEAAGHVCILKDAFDFESPSEIANLILAENCEAALALHLYRGGRLLQGHRIPFGVIFGGTDVNEDANQAEKNTVMGRVLEEARFAVAFTESMKEMAQVQWPHAKGKIYVQSQGIATTPNAAFNWNTFLQRSEINQSADNLHIFLLICGLRQVKDPLYLVDAFSEWHQEEPNVYLVILGPEVDPVFTREVKANVKRAAGVRLIGEMPQEDLHAVVKNCFAVVNSSVSEGMSAAILEAMDLEVPVLARNIPGNAAMVKHEVTGLLFSNPQEFVHLAKRLVSDPALEKEIVVNGKEYVRMYHSWQVERDTYQQLIRKLEGSTED</sequence>
<accession>Q5RAF1</accession>
<keyword id="KW-0328">Glycosyltransferase</keyword>
<keyword id="KW-1185">Reference proteome</keyword>
<keyword id="KW-0964">Secreted</keyword>
<keyword id="KW-0732">Signal</keyword>
<keyword id="KW-0808">Transferase</keyword>
<protein>
    <recommendedName>
        <fullName>Glycosyltransferase 1 domain-containing protein 1</fullName>
        <ecNumber>2.4.-.-</ecNumber>
    </recommendedName>
</protein>
<evidence type="ECO:0000255" key="1"/>
<evidence type="ECO:0000305" key="2"/>
<name>GL1D1_PONAB</name>
<feature type="signal peptide" evidence="1">
    <location>
        <begin position="1"/>
        <end position="16"/>
    </location>
</feature>
<feature type="chain" id="PRO_0000312205" description="Glycosyltransferase 1 domain-containing protein 1">
    <location>
        <begin position="17"/>
        <end position="346"/>
    </location>
</feature>
<reference key="1">
    <citation type="submission" date="2004-11" db="EMBL/GenBank/DDBJ databases">
        <authorList>
            <consortium name="The German cDNA consortium"/>
        </authorList>
    </citation>
    <scope>NUCLEOTIDE SEQUENCE [LARGE SCALE MRNA]</scope>
    <source>
        <tissue>Brain cortex</tissue>
    </source>
</reference>
<dbReference type="EC" id="2.4.-.-"/>
<dbReference type="EMBL" id="CR859066">
    <property type="protein sequence ID" value="CAH91259.1"/>
    <property type="molecule type" value="mRNA"/>
</dbReference>
<dbReference type="RefSeq" id="NP_001125745.1">
    <property type="nucleotide sequence ID" value="NM_001132273.1"/>
</dbReference>
<dbReference type="SMR" id="Q5RAF1"/>
<dbReference type="FunCoup" id="Q5RAF1">
    <property type="interactions" value="97"/>
</dbReference>
<dbReference type="STRING" id="9601.ENSPPYP00000005833"/>
<dbReference type="CAZy" id="GT4">
    <property type="family name" value="Glycosyltransferase Family 4"/>
</dbReference>
<dbReference type="Ensembl" id="ENSPPYT00000042430.1">
    <property type="protein sequence ID" value="ENSPPYP00000033376.1"/>
    <property type="gene ID" value="ENSPPYG00000005117.3"/>
</dbReference>
<dbReference type="GeneID" id="100172670"/>
<dbReference type="KEGG" id="pon:100172670"/>
<dbReference type="CTD" id="144423"/>
<dbReference type="eggNOG" id="ENOG502QQZE">
    <property type="taxonomic scope" value="Eukaryota"/>
</dbReference>
<dbReference type="GeneTree" id="ENSGT00390000016790"/>
<dbReference type="HOGENOM" id="CLU_009583_7_1_1"/>
<dbReference type="InParanoid" id="Q5RAF1"/>
<dbReference type="OMA" id="FSEWHSE"/>
<dbReference type="OrthoDB" id="512920at2759"/>
<dbReference type="Proteomes" id="UP000001595">
    <property type="component" value="Chromosome 12"/>
</dbReference>
<dbReference type="GO" id="GO:0005576">
    <property type="term" value="C:extracellular region"/>
    <property type="evidence" value="ECO:0007669"/>
    <property type="project" value="UniProtKB-SubCell"/>
</dbReference>
<dbReference type="GO" id="GO:0016757">
    <property type="term" value="F:glycosyltransferase activity"/>
    <property type="evidence" value="ECO:0007669"/>
    <property type="project" value="UniProtKB-KW"/>
</dbReference>
<dbReference type="CDD" id="cd03801">
    <property type="entry name" value="GT4_PimA-like"/>
    <property type="match status" value="1"/>
</dbReference>
<dbReference type="FunFam" id="3.40.50.2000:FF:000126">
    <property type="entry name" value="Glycosyltransferase 1 domain containing 1"/>
    <property type="match status" value="1"/>
</dbReference>
<dbReference type="Gene3D" id="3.40.50.2000">
    <property type="entry name" value="Glycogen Phosphorylase B"/>
    <property type="match status" value="2"/>
</dbReference>
<dbReference type="InterPro" id="IPR001296">
    <property type="entry name" value="Glyco_trans_1"/>
</dbReference>
<dbReference type="InterPro" id="IPR052622">
    <property type="entry name" value="Glycosyltransferase_G1"/>
</dbReference>
<dbReference type="PANTHER" id="PTHR46660">
    <property type="match status" value="1"/>
</dbReference>
<dbReference type="PANTHER" id="PTHR46660:SF2">
    <property type="entry name" value="GLYCOSYLTRANSFERASE 1 DOMAIN-CONTAINING PROTEIN 1"/>
    <property type="match status" value="1"/>
</dbReference>
<dbReference type="Pfam" id="PF00534">
    <property type="entry name" value="Glycos_transf_1"/>
    <property type="match status" value="1"/>
</dbReference>
<dbReference type="SUPFAM" id="SSF53756">
    <property type="entry name" value="UDP-Glycosyltransferase/glycogen phosphorylase"/>
    <property type="match status" value="1"/>
</dbReference>
<proteinExistence type="evidence at transcript level"/>
<organism>
    <name type="scientific">Pongo abelii</name>
    <name type="common">Sumatran orangutan</name>
    <name type="synonym">Pongo pygmaeus abelii</name>
    <dbReference type="NCBI Taxonomy" id="9601"/>
    <lineage>
        <taxon>Eukaryota</taxon>
        <taxon>Metazoa</taxon>
        <taxon>Chordata</taxon>
        <taxon>Craniata</taxon>
        <taxon>Vertebrata</taxon>
        <taxon>Euteleostomi</taxon>
        <taxon>Mammalia</taxon>
        <taxon>Eutheria</taxon>
        <taxon>Euarchontoglires</taxon>
        <taxon>Primates</taxon>
        <taxon>Haplorrhini</taxon>
        <taxon>Catarrhini</taxon>
        <taxon>Hominidae</taxon>
        <taxon>Pongo</taxon>
    </lineage>
</organism>
<comment type="subcellular location">
    <subcellularLocation>
        <location evidence="2">Secreted</location>
    </subcellularLocation>
</comment>
<comment type="similarity">
    <text evidence="2">Belongs to the glycosyltransferase group 1 family. Glycosyltransferase 4 subfamily.</text>
</comment>
<gene>
    <name type="primary">GLT1D1</name>
</gene>